<feature type="chain" id="PRO_0000180732" description="Glucose-6-phosphate isomerase">
    <location>
        <begin position="1"/>
        <end position="443"/>
    </location>
</feature>
<feature type="active site" description="Proton donor" evidence="1">
    <location>
        <position position="285"/>
    </location>
</feature>
<feature type="active site" evidence="1">
    <location>
        <position position="306"/>
    </location>
</feature>
<feature type="active site" evidence="1">
    <location>
        <position position="420"/>
    </location>
</feature>
<reference key="1">
    <citation type="journal article" date="2003" name="Mol. Microbiol.">
        <title>Genome-based analysis of virulence genes in a non-biofilm-forming Staphylococcus epidermidis strain (ATCC 12228).</title>
        <authorList>
            <person name="Zhang Y.-Q."/>
            <person name="Ren S.-X."/>
            <person name="Li H.-L."/>
            <person name="Wang Y.-X."/>
            <person name="Fu G."/>
            <person name="Yang J."/>
            <person name="Qin Z.-Q."/>
            <person name="Miao Y.-G."/>
            <person name="Wang W.-Y."/>
            <person name="Chen R.-S."/>
            <person name="Shen Y."/>
            <person name="Chen Z."/>
            <person name="Yuan Z.-H."/>
            <person name="Zhao G.-P."/>
            <person name="Qu D."/>
            <person name="Danchin A."/>
            <person name="Wen Y.-M."/>
        </authorList>
    </citation>
    <scope>NUCLEOTIDE SEQUENCE [LARGE SCALE GENOMIC DNA]</scope>
    <source>
        <strain>ATCC 12228 / FDA PCI 1200</strain>
    </source>
</reference>
<protein>
    <recommendedName>
        <fullName evidence="1">Glucose-6-phosphate isomerase</fullName>
        <shortName evidence="1">GPI</shortName>
        <ecNumber evidence="1">5.3.1.9</ecNumber>
    </recommendedName>
    <alternativeName>
        <fullName evidence="1">Phosphoglucose isomerase</fullName>
        <shortName evidence="1">PGI</shortName>
    </alternativeName>
    <alternativeName>
        <fullName evidence="1">Phosphohexose isomerase</fullName>
        <shortName evidence="1">PHI</shortName>
    </alternativeName>
</protein>
<dbReference type="EC" id="5.3.1.9" evidence="1"/>
<dbReference type="EMBL" id="AE015929">
    <property type="protein sequence ID" value="AAO04255.1"/>
    <property type="molecule type" value="Genomic_DNA"/>
</dbReference>
<dbReference type="RefSeq" id="NP_764213.1">
    <property type="nucleotide sequence ID" value="NC_004461.1"/>
</dbReference>
<dbReference type="RefSeq" id="WP_001831993.1">
    <property type="nucleotide sequence ID" value="NZ_WBME01000043.1"/>
</dbReference>
<dbReference type="SMR" id="Q8CT80"/>
<dbReference type="KEGG" id="sep:SE_0658"/>
<dbReference type="PATRIC" id="fig|176280.10.peg.632"/>
<dbReference type="eggNOG" id="COG0166">
    <property type="taxonomic scope" value="Bacteria"/>
</dbReference>
<dbReference type="HOGENOM" id="CLU_037303_0_1_9"/>
<dbReference type="OrthoDB" id="140919at2"/>
<dbReference type="UniPathway" id="UPA00109">
    <property type="reaction ID" value="UER00181"/>
</dbReference>
<dbReference type="UniPathway" id="UPA00138"/>
<dbReference type="Proteomes" id="UP000001411">
    <property type="component" value="Chromosome"/>
</dbReference>
<dbReference type="GO" id="GO:0005829">
    <property type="term" value="C:cytosol"/>
    <property type="evidence" value="ECO:0007669"/>
    <property type="project" value="TreeGrafter"/>
</dbReference>
<dbReference type="GO" id="GO:0097367">
    <property type="term" value="F:carbohydrate derivative binding"/>
    <property type="evidence" value="ECO:0007669"/>
    <property type="project" value="InterPro"/>
</dbReference>
<dbReference type="GO" id="GO:0004347">
    <property type="term" value="F:glucose-6-phosphate isomerase activity"/>
    <property type="evidence" value="ECO:0007669"/>
    <property type="project" value="UniProtKB-UniRule"/>
</dbReference>
<dbReference type="GO" id="GO:0048029">
    <property type="term" value="F:monosaccharide binding"/>
    <property type="evidence" value="ECO:0007669"/>
    <property type="project" value="TreeGrafter"/>
</dbReference>
<dbReference type="GO" id="GO:0006094">
    <property type="term" value="P:gluconeogenesis"/>
    <property type="evidence" value="ECO:0007669"/>
    <property type="project" value="UniProtKB-UniRule"/>
</dbReference>
<dbReference type="GO" id="GO:0051156">
    <property type="term" value="P:glucose 6-phosphate metabolic process"/>
    <property type="evidence" value="ECO:0007669"/>
    <property type="project" value="TreeGrafter"/>
</dbReference>
<dbReference type="GO" id="GO:0006096">
    <property type="term" value="P:glycolytic process"/>
    <property type="evidence" value="ECO:0007669"/>
    <property type="project" value="UniProtKB-UniRule"/>
</dbReference>
<dbReference type="CDD" id="cd05015">
    <property type="entry name" value="SIS_PGI_1"/>
    <property type="match status" value="1"/>
</dbReference>
<dbReference type="CDD" id="cd05016">
    <property type="entry name" value="SIS_PGI_2"/>
    <property type="match status" value="1"/>
</dbReference>
<dbReference type="FunFam" id="3.40.50.10490:FF:000015">
    <property type="entry name" value="Glucose-6-phosphate isomerase"/>
    <property type="match status" value="1"/>
</dbReference>
<dbReference type="FunFam" id="3.40.50.10490:FF:000016">
    <property type="entry name" value="Glucose-6-phosphate isomerase"/>
    <property type="match status" value="1"/>
</dbReference>
<dbReference type="Gene3D" id="3.40.50.10490">
    <property type="entry name" value="Glucose-6-phosphate isomerase like protein, domain 1"/>
    <property type="match status" value="3"/>
</dbReference>
<dbReference type="HAMAP" id="MF_00473">
    <property type="entry name" value="G6P_isomerase"/>
    <property type="match status" value="1"/>
</dbReference>
<dbReference type="InterPro" id="IPR001672">
    <property type="entry name" value="G6P_Isomerase"/>
</dbReference>
<dbReference type="InterPro" id="IPR018189">
    <property type="entry name" value="Phosphoglucose_isomerase_CS"/>
</dbReference>
<dbReference type="InterPro" id="IPR046348">
    <property type="entry name" value="SIS_dom_sf"/>
</dbReference>
<dbReference type="InterPro" id="IPR035476">
    <property type="entry name" value="SIS_PGI_1"/>
</dbReference>
<dbReference type="InterPro" id="IPR035482">
    <property type="entry name" value="SIS_PGI_2"/>
</dbReference>
<dbReference type="NCBIfam" id="NF010697">
    <property type="entry name" value="PRK14097.1"/>
    <property type="match status" value="1"/>
</dbReference>
<dbReference type="PANTHER" id="PTHR11469">
    <property type="entry name" value="GLUCOSE-6-PHOSPHATE ISOMERASE"/>
    <property type="match status" value="1"/>
</dbReference>
<dbReference type="PANTHER" id="PTHR11469:SF1">
    <property type="entry name" value="GLUCOSE-6-PHOSPHATE ISOMERASE"/>
    <property type="match status" value="1"/>
</dbReference>
<dbReference type="Pfam" id="PF00342">
    <property type="entry name" value="PGI"/>
    <property type="match status" value="1"/>
</dbReference>
<dbReference type="PRINTS" id="PR00662">
    <property type="entry name" value="G6PISOMERASE"/>
</dbReference>
<dbReference type="SUPFAM" id="SSF53697">
    <property type="entry name" value="SIS domain"/>
    <property type="match status" value="1"/>
</dbReference>
<dbReference type="PROSITE" id="PS00765">
    <property type="entry name" value="P_GLUCOSE_ISOMERASE_1"/>
    <property type="match status" value="1"/>
</dbReference>
<dbReference type="PROSITE" id="PS00174">
    <property type="entry name" value="P_GLUCOSE_ISOMERASE_2"/>
    <property type="match status" value="1"/>
</dbReference>
<dbReference type="PROSITE" id="PS51463">
    <property type="entry name" value="P_GLUCOSE_ISOMERASE_3"/>
    <property type="match status" value="1"/>
</dbReference>
<evidence type="ECO:0000255" key="1">
    <source>
        <dbReference type="HAMAP-Rule" id="MF_00473"/>
    </source>
</evidence>
<sequence>MTHIQLDYGKTLEFFDKHELDQQKDIVKTIHQTIHKGTGAGNDFLGWLDLPVDYDKEEFSRIVEASKRIKSNSDVLVVIGIGGSYLGARAAIEMLTSSFRTNTEYPEIVFVGNHLSSSYTKELLDYLQGKDFSVNVISKSGTTTEPAVAFRLFKQLVEEKYGKDEAKKRIFATTDKSKGALKQLADNEGYETFVVPDDVGGRYSVLTAVGLLPIATAGINIESIMIGAAKAREELSSDDLDQNIAYQYATIRNILYSKGYTTEMLINYEPSMQYFNEWWKQLYGESEGKDFKGIYPSSANYTTDLHSLGQYVQEGRRFLFETVVKVNHPKHDIKIEEDADDLDGLNYLAGKSIDEVNTKAFEGTLLAHTDGGVPNIVVNIPQLDEETFGYVVYFFELACAMSGYQLGVNPFNQPGVEAYKQNMFALLGKPGFEDKKKELENRL</sequence>
<gene>
    <name evidence="1" type="primary">pgi</name>
    <name type="ordered locus">SE_0658</name>
</gene>
<accession>Q8CT80</accession>
<name>G6PI_STAES</name>
<proteinExistence type="inferred from homology"/>
<keyword id="KW-0963">Cytoplasm</keyword>
<keyword id="KW-0312">Gluconeogenesis</keyword>
<keyword id="KW-0324">Glycolysis</keyword>
<keyword id="KW-0413">Isomerase</keyword>
<organism>
    <name type="scientific">Staphylococcus epidermidis (strain ATCC 12228 / FDA PCI 1200)</name>
    <dbReference type="NCBI Taxonomy" id="176280"/>
    <lineage>
        <taxon>Bacteria</taxon>
        <taxon>Bacillati</taxon>
        <taxon>Bacillota</taxon>
        <taxon>Bacilli</taxon>
        <taxon>Bacillales</taxon>
        <taxon>Staphylococcaceae</taxon>
        <taxon>Staphylococcus</taxon>
    </lineage>
</organism>
<comment type="function">
    <text evidence="1">Catalyzes the reversible isomerization of glucose-6-phosphate to fructose-6-phosphate.</text>
</comment>
<comment type="catalytic activity">
    <reaction evidence="1">
        <text>alpha-D-glucose 6-phosphate = beta-D-fructose 6-phosphate</text>
        <dbReference type="Rhea" id="RHEA:11816"/>
        <dbReference type="ChEBI" id="CHEBI:57634"/>
        <dbReference type="ChEBI" id="CHEBI:58225"/>
        <dbReference type="EC" id="5.3.1.9"/>
    </reaction>
</comment>
<comment type="pathway">
    <text evidence="1">Carbohydrate biosynthesis; gluconeogenesis.</text>
</comment>
<comment type="pathway">
    <text evidence="1">Carbohydrate degradation; glycolysis; D-glyceraldehyde 3-phosphate and glycerone phosphate from D-glucose: step 2/4.</text>
</comment>
<comment type="subcellular location">
    <subcellularLocation>
        <location evidence="1">Cytoplasm</location>
    </subcellularLocation>
</comment>
<comment type="similarity">
    <text evidence="1">Belongs to the GPI family.</text>
</comment>